<dbReference type="EMBL" id="X17403">
    <property type="protein sequence ID" value="CAA35319.1"/>
    <property type="molecule type" value="Genomic_DNA"/>
</dbReference>
<dbReference type="EMBL" id="BK000394">
    <property type="protein sequence ID" value="DAA00107.1"/>
    <property type="molecule type" value="Genomic_DNA"/>
</dbReference>
<dbReference type="PIR" id="S09884">
    <property type="entry name" value="S09884"/>
</dbReference>
<dbReference type="Proteomes" id="UP000008991">
    <property type="component" value="Segment"/>
</dbReference>
<dbReference type="Proteomes" id="UP000008992">
    <property type="component" value="Segment"/>
</dbReference>
<dbReference type="GO" id="GO:0042025">
    <property type="term" value="C:host cell nucleus"/>
    <property type="evidence" value="ECO:0007669"/>
    <property type="project" value="UniProtKB-SubCell"/>
</dbReference>
<dbReference type="GO" id="GO:0006355">
    <property type="term" value="P:regulation of DNA-templated transcription"/>
    <property type="evidence" value="ECO:0007669"/>
    <property type="project" value="InterPro"/>
</dbReference>
<dbReference type="InterPro" id="IPR005028">
    <property type="entry name" value="Herpes_IE2_3"/>
</dbReference>
<dbReference type="Pfam" id="PF03361">
    <property type="entry name" value="Herpes_IE2_3"/>
    <property type="match status" value="1"/>
</dbReference>
<organism>
    <name type="scientific">Human cytomegalovirus (strain AD169)</name>
    <name type="common">HHV-5</name>
    <name type="synonym">Human herpesvirus 5</name>
    <dbReference type="NCBI Taxonomy" id="10360"/>
    <lineage>
        <taxon>Viruses</taxon>
        <taxon>Duplodnaviria</taxon>
        <taxon>Heunggongvirae</taxon>
        <taxon>Peploviricota</taxon>
        <taxon>Herviviricetes</taxon>
        <taxon>Herpesvirales</taxon>
        <taxon>Orthoherpesviridae</taxon>
        <taxon>Betaherpesvirinae</taxon>
        <taxon>Cytomegalovirus</taxon>
        <taxon>Cytomegalovirus humanbeta5</taxon>
        <taxon>Human cytomegalovirus</taxon>
    </lineage>
</organism>
<gene>
    <name type="primary">UL117</name>
</gene>
<reference key="1">
    <citation type="journal article" date="1990" name="Curr. Top. Microbiol. Immunol.">
        <title>Analysis of the protein-coding content of the sequence of human cytomegalovirus strain AD169.</title>
        <authorList>
            <person name="Chee M.S."/>
            <person name="Bankier A.T."/>
            <person name="Beck S."/>
            <person name="Bohni R."/>
            <person name="Brown C.M."/>
            <person name="Cerny R."/>
            <person name="Horsnell T."/>
            <person name="Hutchison C.A. III"/>
            <person name="Kouzarides T."/>
            <person name="Martignetti J.A."/>
            <person name="Preddie E."/>
            <person name="Satchwell S.C."/>
            <person name="Tomlinson P."/>
            <person name="Weston K.M."/>
            <person name="Barrell B.G."/>
        </authorList>
    </citation>
    <scope>NUCLEOTIDE SEQUENCE [LARGE SCALE GENOMIC DNA]</scope>
</reference>
<reference key="2">
    <citation type="journal article" date="2003" name="J. Gen. Virol.">
        <title>The human cytomegalovirus genome revisited: comparison with the chimpanzee cytomegalovirus genome.</title>
        <authorList>
            <person name="Davison A.J."/>
            <person name="Dolan A."/>
            <person name="Akter P."/>
            <person name="Addison C."/>
            <person name="Dargan D.J."/>
            <person name="Alcendor D.J."/>
            <person name="McGeoch D.J."/>
            <person name="Hayward G.S."/>
        </authorList>
    </citation>
    <scope>GENOME REANNOTATION</scope>
</reference>
<reference key="3">
    <citation type="journal article" date="2003" name="J. Gen. Virol.">
        <authorList>
            <person name="Davison A.J."/>
            <person name="Dolan A."/>
            <person name="Akter P."/>
            <person name="Addison C."/>
            <person name="Dargan D.J."/>
            <person name="Alcendor D.J."/>
            <person name="McGeoch D.J."/>
            <person name="Hayward G.S."/>
        </authorList>
    </citation>
    <scope>ERRATUM OF PUBMED:12533697</scope>
</reference>
<reference key="4">
    <citation type="journal article" date="2008" name="J. Virol.">
        <title>The full-length protein encoded by human cytomegalovirus gene UL117 is required for the proper maturation of viral replication compartments.</title>
        <authorList>
            <person name="Qian Z."/>
            <person name="Xuan B."/>
            <person name="Hong T.T."/>
            <person name="Yu D."/>
        </authorList>
    </citation>
    <scope>SUBCELLULAR LOCATION</scope>
    <scope>ISOFORM UL117.5</scope>
</reference>
<reference key="5">
    <citation type="journal article" date="2010" name="PLoS Pathog.">
        <title>Human cytomegalovirus protein pUL117 targets the mini-chromosome maintenance complex and suppresses cellular DNA synthesis.</title>
        <authorList>
            <person name="Qian Z."/>
            <person name="Leung-Pineda V."/>
            <person name="Xuan B."/>
            <person name="Piwnica-Worms H."/>
            <person name="Yu D."/>
        </authorList>
    </citation>
    <scope>FUNCTION</scope>
</reference>
<feature type="chain" id="PRO_0000116332" description="Protein UL117">
    <location>
        <begin position="1"/>
        <end position="424"/>
    </location>
</feature>
<feature type="region of interest" description="Disordered" evidence="1">
    <location>
        <begin position="57"/>
        <end position="82"/>
    </location>
</feature>
<feature type="splice variant" id="VSP_044012" description="In isoform UL117.5." evidence="4">
    <location>
        <begin position="1"/>
        <end position="130"/>
    </location>
</feature>
<accession>P16770</accession>
<accession>Q7M6S8</accession>
<evidence type="ECO:0000256" key="1">
    <source>
        <dbReference type="SAM" id="MobiDB-lite"/>
    </source>
</evidence>
<evidence type="ECO:0000269" key="2">
    <source>
    </source>
</evidence>
<evidence type="ECO:0000269" key="3">
    <source>
    </source>
</evidence>
<evidence type="ECO:0000305" key="4"/>
<protein>
    <recommendedName>
        <fullName>Protein UL117</fullName>
    </recommendedName>
</protein>
<name>UL117_HCMVA</name>
<proteinExistence type="inferred from homology"/>
<keyword id="KW-0024">Alternative initiation</keyword>
<keyword id="KW-1048">Host nucleus</keyword>
<keyword id="KW-1185">Reference proteome</keyword>
<comment type="function">
    <text evidence="3">Plays a role in the inhibition of host DNA replication in the infected cell. Targets the mini-chromosome maintenance (MCM) complex and blocks the accumulation of MCM proteins and their loading onto host chromatin.</text>
</comment>
<comment type="subcellular location">
    <molecule>Isoform UL117</molecule>
    <subcellularLocation>
        <location evidence="2">Host nucleus</location>
    </subcellularLocation>
    <text evidence="2">The major fraction localizes to nuclear compartments.</text>
</comment>
<comment type="subcellular location">
    <molecule>Isoform UL117.5</molecule>
    <subcellularLocation>
        <location evidence="2">Host nucleus</location>
    </subcellularLocation>
</comment>
<comment type="alternative products">
    <event type="alternative initiation"/>
    <isoform>
        <id>P16770-1</id>
        <name>UL117</name>
        <sequence type="displayed"/>
    </isoform>
    <isoform>
        <id>P16770-2</id>
        <name>UL117.5</name>
        <sequence type="described" ref="VSP_044012"/>
    </isoform>
</comment>
<comment type="similarity">
    <text evidence="4">Belongs to the herpesviridae U84 family.</text>
</comment>
<organismHost>
    <name type="scientific">Homo sapiens</name>
    <name type="common">Human</name>
    <dbReference type="NCBI Taxonomy" id="9606"/>
</organismHost>
<sequence length="424" mass="45463">MVMFSQDHVQIVYGSTRICKSLAPANKRKTHRTIVVAPRRGFLRIPPDGQDVNHVKIVPTTSSSLAPPRDDERRPTPPLRPPLTVYPYGTSLIRRSARDAKLRSKLIVFHITRPALGQHPQNPGISGPAAMDHSEFLTSFRREVDRQTVLTAESAPATAEVCLGDALPGGVMGGGGLPAGVGSASAAVAAAAAAVAGVPVAANPVMPATATVTTPPMIDLTSHHRPLTLFTPASAAAAPAVATNGGNATYILPADCRYAPLFASKYKYVFEEVSRLMRLHDSTAVQLQISASCGNAFQALKSALLKLHNVTVLAGQQLITQTMPHTPQAVATFKFFHQDPNRVLDCIRPVVPRSTSYHETGVYQMWVSGATKKDLFDAVTLCASIVEKQPDVFNINVSLLTYPSIAAPHLPLYNEFTSFRLPTS</sequence>